<sequence length="94" mass="10220">MKIRPLADRVVIKKVEAEEKTASGIVLPGAAKEQPQIAEVVEVGPGGIVEGKEIKMELTVGDKVIFQKYSGTEVKIEGQEYTILRQSDVLAVIE</sequence>
<dbReference type="EMBL" id="AM180355">
    <property type="protein sequence ID" value="CAJ67015.1"/>
    <property type="molecule type" value="Genomic_DNA"/>
</dbReference>
<dbReference type="RefSeq" id="WP_003420907.1">
    <property type="nucleotide sequence ID" value="NZ_JAUPES010000004.1"/>
</dbReference>
<dbReference type="RefSeq" id="YP_001086663.1">
    <property type="nucleotide sequence ID" value="NC_009089.1"/>
</dbReference>
<dbReference type="SMR" id="Q18CT6"/>
<dbReference type="STRING" id="272563.CD630_01930"/>
<dbReference type="EnsemblBacteria" id="CAJ67015">
    <property type="protein sequence ID" value="CAJ67015"/>
    <property type="gene ID" value="CD630_01930"/>
</dbReference>
<dbReference type="GeneID" id="66352742"/>
<dbReference type="KEGG" id="cdf:CD630_01930"/>
<dbReference type="KEGG" id="pdc:CDIF630_00314"/>
<dbReference type="PATRIC" id="fig|272563.120.peg.208"/>
<dbReference type="eggNOG" id="COG0234">
    <property type="taxonomic scope" value="Bacteria"/>
</dbReference>
<dbReference type="OrthoDB" id="9806791at2"/>
<dbReference type="PhylomeDB" id="Q18CT6"/>
<dbReference type="BioCyc" id="PDIF272563:G12WB-298-MONOMER"/>
<dbReference type="Proteomes" id="UP000001978">
    <property type="component" value="Chromosome"/>
</dbReference>
<dbReference type="GO" id="GO:0005737">
    <property type="term" value="C:cytoplasm"/>
    <property type="evidence" value="ECO:0007669"/>
    <property type="project" value="UniProtKB-SubCell"/>
</dbReference>
<dbReference type="GO" id="GO:0005524">
    <property type="term" value="F:ATP binding"/>
    <property type="evidence" value="ECO:0007669"/>
    <property type="project" value="InterPro"/>
</dbReference>
<dbReference type="GO" id="GO:0046872">
    <property type="term" value="F:metal ion binding"/>
    <property type="evidence" value="ECO:0007669"/>
    <property type="project" value="TreeGrafter"/>
</dbReference>
<dbReference type="GO" id="GO:0044183">
    <property type="term" value="F:protein folding chaperone"/>
    <property type="evidence" value="ECO:0007669"/>
    <property type="project" value="InterPro"/>
</dbReference>
<dbReference type="GO" id="GO:0051087">
    <property type="term" value="F:protein-folding chaperone binding"/>
    <property type="evidence" value="ECO:0007669"/>
    <property type="project" value="TreeGrafter"/>
</dbReference>
<dbReference type="GO" id="GO:0051082">
    <property type="term" value="F:unfolded protein binding"/>
    <property type="evidence" value="ECO:0007669"/>
    <property type="project" value="TreeGrafter"/>
</dbReference>
<dbReference type="GO" id="GO:0051085">
    <property type="term" value="P:chaperone cofactor-dependent protein refolding"/>
    <property type="evidence" value="ECO:0007669"/>
    <property type="project" value="TreeGrafter"/>
</dbReference>
<dbReference type="CDD" id="cd00320">
    <property type="entry name" value="cpn10"/>
    <property type="match status" value="1"/>
</dbReference>
<dbReference type="FunFam" id="2.30.33.40:FF:000001">
    <property type="entry name" value="10 kDa chaperonin"/>
    <property type="match status" value="1"/>
</dbReference>
<dbReference type="Gene3D" id="2.30.33.40">
    <property type="entry name" value="GroES chaperonin"/>
    <property type="match status" value="1"/>
</dbReference>
<dbReference type="HAMAP" id="MF_00580">
    <property type="entry name" value="CH10"/>
    <property type="match status" value="1"/>
</dbReference>
<dbReference type="InterPro" id="IPR020818">
    <property type="entry name" value="Chaperonin_GroES"/>
</dbReference>
<dbReference type="InterPro" id="IPR037124">
    <property type="entry name" value="Chaperonin_GroES_sf"/>
</dbReference>
<dbReference type="InterPro" id="IPR018369">
    <property type="entry name" value="Chaprnonin_Cpn10_CS"/>
</dbReference>
<dbReference type="InterPro" id="IPR011032">
    <property type="entry name" value="GroES-like_sf"/>
</dbReference>
<dbReference type="NCBIfam" id="NF001531">
    <property type="entry name" value="PRK00364.2-2"/>
    <property type="match status" value="1"/>
</dbReference>
<dbReference type="NCBIfam" id="NF001533">
    <property type="entry name" value="PRK00364.2-4"/>
    <property type="match status" value="1"/>
</dbReference>
<dbReference type="PANTHER" id="PTHR10772">
    <property type="entry name" value="10 KDA HEAT SHOCK PROTEIN"/>
    <property type="match status" value="1"/>
</dbReference>
<dbReference type="PANTHER" id="PTHR10772:SF58">
    <property type="entry name" value="CO-CHAPERONIN GROES"/>
    <property type="match status" value="1"/>
</dbReference>
<dbReference type="Pfam" id="PF00166">
    <property type="entry name" value="Cpn10"/>
    <property type="match status" value="1"/>
</dbReference>
<dbReference type="PRINTS" id="PR00297">
    <property type="entry name" value="CHAPERONIN10"/>
</dbReference>
<dbReference type="SMART" id="SM00883">
    <property type="entry name" value="Cpn10"/>
    <property type="match status" value="1"/>
</dbReference>
<dbReference type="SUPFAM" id="SSF50129">
    <property type="entry name" value="GroES-like"/>
    <property type="match status" value="1"/>
</dbReference>
<dbReference type="PROSITE" id="PS00681">
    <property type="entry name" value="CHAPERONINS_CPN10"/>
    <property type="match status" value="1"/>
</dbReference>
<name>CH10_CLOD6</name>
<proteinExistence type="inferred from homology"/>
<organism>
    <name type="scientific">Clostridioides difficile (strain 630)</name>
    <name type="common">Peptoclostridium difficile</name>
    <dbReference type="NCBI Taxonomy" id="272563"/>
    <lineage>
        <taxon>Bacteria</taxon>
        <taxon>Bacillati</taxon>
        <taxon>Bacillota</taxon>
        <taxon>Clostridia</taxon>
        <taxon>Peptostreptococcales</taxon>
        <taxon>Peptostreptococcaceae</taxon>
        <taxon>Clostridioides</taxon>
    </lineage>
</organism>
<feature type="chain" id="PRO_1000025239" description="Co-chaperonin GroES">
    <location>
        <begin position="1"/>
        <end position="94"/>
    </location>
</feature>
<reference key="1">
    <citation type="journal article" date="2006" name="Nat. Genet.">
        <title>The multidrug-resistant human pathogen Clostridium difficile has a highly mobile, mosaic genome.</title>
        <authorList>
            <person name="Sebaihia M."/>
            <person name="Wren B.W."/>
            <person name="Mullany P."/>
            <person name="Fairweather N.F."/>
            <person name="Minton N."/>
            <person name="Stabler R."/>
            <person name="Thomson N.R."/>
            <person name="Roberts A.P."/>
            <person name="Cerdeno-Tarraga A.M."/>
            <person name="Wang H."/>
            <person name="Holden M.T.G."/>
            <person name="Wright A."/>
            <person name="Churcher C."/>
            <person name="Quail M.A."/>
            <person name="Baker S."/>
            <person name="Bason N."/>
            <person name="Brooks K."/>
            <person name="Chillingworth T."/>
            <person name="Cronin A."/>
            <person name="Davis P."/>
            <person name="Dowd L."/>
            <person name="Fraser A."/>
            <person name="Feltwell T."/>
            <person name="Hance Z."/>
            <person name="Holroyd S."/>
            <person name="Jagels K."/>
            <person name="Moule S."/>
            <person name="Mungall K."/>
            <person name="Price C."/>
            <person name="Rabbinowitsch E."/>
            <person name="Sharp S."/>
            <person name="Simmonds M."/>
            <person name="Stevens K."/>
            <person name="Unwin L."/>
            <person name="Whithead S."/>
            <person name="Dupuy B."/>
            <person name="Dougan G."/>
            <person name="Barrell B."/>
            <person name="Parkhill J."/>
        </authorList>
    </citation>
    <scope>NUCLEOTIDE SEQUENCE [LARGE SCALE GENOMIC DNA]</scope>
    <source>
        <strain>630</strain>
    </source>
</reference>
<evidence type="ECO:0000255" key="1">
    <source>
        <dbReference type="HAMAP-Rule" id="MF_00580"/>
    </source>
</evidence>
<gene>
    <name evidence="1" type="primary">groES</name>
    <name evidence="1" type="synonym">groS</name>
    <name type="ordered locus">CD630_01930</name>
</gene>
<comment type="function">
    <text evidence="1">Together with the chaperonin GroEL, plays an essential role in assisting protein folding. The GroEL-GroES system forms a nano-cage that allows encapsulation of the non-native substrate proteins and provides a physical environment optimized to promote and accelerate protein folding. GroES binds to the apical surface of the GroEL ring, thereby capping the opening of the GroEL channel.</text>
</comment>
<comment type="subunit">
    <text evidence="1">Heptamer of 7 subunits arranged in a ring. Interacts with the chaperonin GroEL.</text>
</comment>
<comment type="subcellular location">
    <subcellularLocation>
        <location evidence="1">Cytoplasm</location>
    </subcellularLocation>
</comment>
<comment type="similarity">
    <text evidence="1">Belongs to the GroES chaperonin family.</text>
</comment>
<protein>
    <recommendedName>
        <fullName evidence="1">Co-chaperonin GroES</fullName>
    </recommendedName>
    <alternativeName>
        <fullName evidence="1">10 kDa chaperonin</fullName>
    </alternativeName>
    <alternativeName>
        <fullName evidence="1">Chaperonin-10</fullName>
        <shortName evidence="1">Cpn10</shortName>
    </alternativeName>
</protein>
<accession>Q18CT6</accession>
<keyword id="KW-0143">Chaperone</keyword>
<keyword id="KW-0963">Cytoplasm</keyword>
<keyword id="KW-1185">Reference proteome</keyword>